<proteinExistence type="inferred from homology"/>
<gene>
    <name evidence="1" type="primary">rhaM</name>
    <name type="ordered locus">lp_3594</name>
</gene>
<name>RHAM_LACPL</name>
<accession>Q88S50</accession>
<accession>F9ULE8</accession>
<comment type="function">
    <text evidence="1">Involved in the anomeric conversion of L-rhamnose.</text>
</comment>
<comment type="catalytic activity">
    <reaction evidence="1">
        <text>alpha-L-rhamnose = beta-L-rhamnose</text>
        <dbReference type="Rhea" id="RHEA:25584"/>
        <dbReference type="ChEBI" id="CHEBI:27586"/>
        <dbReference type="ChEBI" id="CHEBI:27907"/>
        <dbReference type="EC" id="5.1.3.32"/>
    </reaction>
</comment>
<comment type="pathway">
    <text evidence="1">Carbohydrate metabolism; L-rhamnose metabolism.</text>
</comment>
<comment type="subunit">
    <text evidence="1">Homodimer.</text>
</comment>
<comment type="subcellular location">
    <subcellularLocation>
        <location evidence="1">Cytoplasm</location>
    </subcellularLocation>
</comment>
<comment type="similarity">
    <text evidence="1">Belongs to the rhamnose mutarotase family.</text>
</comment>
<dbReference type="EC" id="5.1.3.32" evidence="1"/>
<dbReference type="EMBL" id="AL935263">
    <property type="protein sequence ID" value="CCC80555.1"/>
    <property type="molecule type" value="Genomic_DNA"/>
</dbReference>
<dbReference type="RefSeq" id="WP_003642941.1">
    <property type="nucleotide sequence ID" value="NC_004567.2"/>
</dbReference>
<dbReference type="RefSeq" id="YP_004891069.1">
    <property type="nucleotide sequence ID" value="NC_004567.2"/>
</dbReference>
<dbReference type="SMR" id="Q88S50"/>
<dbReference type="STRING" id="220668.lp_3594"/>
<dbReference type="EnsemblBacteria" id="CCC80555">
    <property type="protein sequence ID" value="CCC80555"/>
    <property type="gene ID" value="lp_3594"/>
</dbReference>
<dbReference type="GeneID" id="77216608"/>
<dbReference type="KEGG" id="lpl:lp_3594"/>
<dbReference type="PATRIC" id="fig|220668.9.peg.2999"/>
<dbReference type="eggNOG" id="COG3254">
    <property type="taxonomic scope" value="Bacteria"/>
</dbReference>
<dbReference type="HOGENOM" id="CLU_100689_2_0_9"/>
<dbReference type="OrthoDB" id="9799608at2"/>
<dbReference type="PhylomeDB" id="Q88S50"/>
<dbReference type="UniPathway" id="UPA00125"/>
<dbReference type="Proteomes" id="UP000000432">
    <property type="component" value="Chromosome"/>
</dbReference>
<dbReference type="GO" id="GO:0005737">
    <property type="term" value="C:cytoplasm"/>
    <property type="evidence" value="ECO:0007669"/>
    <property type="project" value="UniProtKB-SubCell"/>
</dbReference>
<dbReference type="GO" id="GO:0062192">
    <property type="term" value="F:L-rhamnose mutarotase activity"/>
    <property type="evidence" value="ECO:0007669"/>
    <property type="project" value="UniProtKB-EC"/>
</dbReference>
<dbReference type="GO" id="GO:0019301">
    <property type="term" value="P:rhamnose catabolic process"/>
    <property type="evidence" value="ECO:0007669"/>
    <property type="project" value="TreeGrafter"/>
</dbReference>
<dbReference type="Gene3D" id="3.30.70.100">
    <property type="match status" value="1"/>
</dbReference>
<dbReference type="HAMAP" id="MF_01663">
    <property type="entry name" value="L_rham_rotase"/>
    <property type="match status" value="1"/>
</dbReference>
<dbReference type="InterPro" id="IPR011008">
    <property type="entry name" value="Dimeric_a/b-barrel"/>
</dbReference>
<dbReference type="InterPro" id="IPR013448">
    <property type="entry name" value="L-rhamnose_mutarotase"/>
</dbReference>
<dbReference type="InterPro" id="IPR008000">
    <property type="entry name" value="Rham/fucose_mutarotase"/>
</dbReference>
<dbReference type="NCBIfam" id="TIGR02625">
    <property type="entry name" value="YiiL_rotase"/>
    <property type="match status" value="1"/>
</dbReference>
<dbReference type="PANTHER" id="PTHR34389">
    <property type="entry name" value="L-RHAMNOSE MUTAROTASE"/>
    <property type="match status" value="1"/>
</dbReference>
<dbReference type="PANTHER" id="PTHR34389:SF2">
    <property type="entry name" value="L-RHAMNOSE MUTAROTASE"/>
    <property type="match status" value="1"/>
</dbReference>
<dbReference type="Pfam" id="PF05336">
    <property type="entry name" value="rhaM"/>
    <property type="match status" value="1"/>
</dbReference>
<dbReference type="SUPFAM" id="SSF54909">
    <property type="entry name" value="Dimeric alpha+beta barrel"/>
    <property type="match status" value="1"/>
</dbReference>
<sequence>MVRLGQVMYLHKDAYEEYAKRHAELWPEMKTALKKYGATNYSIFLNKLTGQTFAYLEVPDEATYNEIAETDICKKWWKYMEPLMDTNEDNSPVTTDLQEVFHLD</sequence>
<organism>
    <name type="scientific">Lactiplantibacillus plantarum (strain ATCC BAA-793 / NCIMB 8826 / WCFS1)</name>
    <name type="common">Lactobacillus plantarum</name>
    <dbReference type="NCBI Taxonomy" id="220668"/>
    <lineage>
        <taxon>Bacteria</taxon>
        <taxon>Bacillati</taxon>
        <taxon>Bacillota</taxon>
        <taxon>Bacilli</taxon>
        <taxon>Lactobacillales</taxon>
        <taxon>Lactobacillaceae</taxon>
        <taxon>Lactiplantibacillus</taxon>
    </lineage>
</organism>
<evidence type="ECO:0000255" key="1">
    <source>
        <dbReference type="HAMAP-Rule" id="MF_01663"/>
    </source>
</evidence>
<reference key="1">
    <citation type="journal article" date="2003" name="Proc. Natl. Acad. Sci. U.S.A.">
        <title>Complete genome sequence of Lactobacillus plantarum WCFS1.</title>
        <authorList>
            <person name="Kleerebezem M."/>
            <person name="Boekhorst J."/>
            <person name="van Kranenburg R."/>
            <person name="Molenaar D."/>
            <person name="Kuipers O.P."/>
            <person name="Leer R."/>
            <person name="Tarchini R."/>
            <person name="Peters S.A."/>
            <person name="Sandbrink H.M."/>
            <person name="Fiers M.W.E.J."/>
            <person name="Stiekema W."/>
            <person name="Klein Lankhorst R.M."/>
            <person name="Bron P.A."/>
            <person name="Hoffer S.M."/>
            <person name="Nierop Groot M.N."/>
            <person name="Kerkhoven R."/>
            <person name="De Vries M."/>
            <person name="Ursing B."/>
            <person name="De Vos W.M."/>
            <person name="Siezen R.J."/>
        </authorList>
    </citation>
    <scope>NUCLEOTIDE SEQUENCE [LARGE SCALE GENOMIC DNA]</scope>
    <source>
        <strain>ATCC BAA-793 / NCIMB 8826 / WCFS1</strain>
    </source>
</reference>
<reference key="2">
    <citation type="journal article" date="2012" name="J. Bacteriol.">
        <title>Complete resequencing and reannotation of the Lactobacillus plantarum WCFS1 genome.</title>
        <authorList>
            <person name="Siezen R.J."/>
            <person name="Francke C."/>
            <person name="Renckens B."/>
            <person name="Boekhorst J."/>
            <person name="Wels M."/>
            <person name="Kleerebezem M."/>
            <person name="van Hijum S.A."/>
        </authorList>
    </citation>
    <scope>NUCLEOTIDE SEQUENCE [LARGE SCALE GENOMIC DNA]</scope>
    <scope>GENOME REANNOTATION</scope>
    <source>
        <strain>ATCC BAA-793 / NCIMB 8826 / WCFS1</strain>
    </source>
</reference>
<protein>
    <recommendedName>
        <fullName evidence="1">L-rhamnose mutarotase</fullName>
        <ecNumber evidence="1">5.1.3.32</ecNumber>
    </recommendedName>
    <alternativeName>
        <fullName evidence="1">Rhamnose 1-epimerase</fullName>
    </alternativeName>
    <alternativeName>
        <fullName evidence="1">Type-3 mutarotase</fullName>
    </alternativeName>
</protein>
<feature type="chain" id="PRO_0000344582" description="L-rhamnose mutarotase">
    <location>
        <begin position="1"/>
        <end position="104"/>
    </location>
</feature>
<feature type="active site" description="Proton donor" evidence="1">
    <location>
        <position position="22"/>
    </location>
</feature>
<feature type="binding site" evidence="1">
    <location>
        <position position="18"/>
    </location>
    <ligand>
        <name>substrate</name>
    </ligand>
</feature>
<feature type="binding site" evidence="1">
    <location>
        <position position="41"/>
    </location>
    <ligand>
        <name>substrate</name>
    </ligand>
</feature>
<feature type="binding site" evidence="1">
    <location>
        <begin position="76"/>
        <end position="77"/>
    </location>
    <ligand>
        <name>substrate</name>
    </ligand>
</feature>
<keyword id="KW-0119">Carbohydrate metabolism</keyword>
<keyword id="KW-0963">Cytoplasm</keyword>
<keyword id="KW-0413">Isomerase</keyword>
<keyword id="KW-1185">Reference proteome</keyword>
<keyword id="KW-0684">Rhamnose metabolism</keyword>